<dbReference type="EMBL" id="CR925976">
    <property type="protein sequence ID" value="CAI29624.1"/>
    <property type="molecule type" value="mRNA"/>
</dbReference>
<dbReference type="RefSeq" id="NP_001127680.1">
    <property type="nucleotide sequence ID" value="NM_001134208.1"/>
</dbReference>
<dbReference type="SMR" id="Q5NVN9"/>
<dbReference type="FunCoup" id="Q5NVN9">
    <property type="interactions" value="799"/>
</dbReference>
<dbReference type="STRING" id="9601.ENSPPYP00000013165"/>
<dbReference type="GeneID" id="100174762"/>
<dbReference type="KEGG" id="pon:100174762"/>
<dbReference type="CTD" id="3005"/>
<dbReference type="eggNOG" id="KOG4012">
    <property type="taxonomic scope" value="Eukaryota"/>
</dbReference>
<dbReference type="InParanoid" id="Q5NVN9"/>
<dbReference type="OrthoDB" id="1110759at2759"/>
<dbReference type="Proteomes" id="UP000001595">
    <property type="component" value="Unplaced"/>
</dbReference>
<dbReference type="GO" id="GO:0000786">
    <property type="term" value="C:nucleosome"/>
    <property type="evidence" value="ECO:0007669"/>
    <property type="project" value="InterPro"/>
</dbReference>
<dbReference type="GO" id="GO:0005634">
    <property type="term" value="C:nucleus"/>
    <property type="evidence" value="ECO:0007669"/>
    <property type="project" value="UniProtKB-SubCell"/>
</dbReference>
<dbReference type="GO" id="GO:0003690">
    <property type="term" value="F:double-stranded DNA binding"/>
    <property type="evidence" value="ECO:0007669"/>
    <property type="project" value="TreeGrafter"/>
</dbReference>
<dbReference type="GO" id="GO:0031492">
    <property type="term" value="F:nucleosomal DNA binding"/>
    <property type="evidence" value="ECO:0007669"/>
    <property type="project" value="TreeGrafter"/>
</dbReference>
<dbReference type="GO" id="GO:0030527">
    <property type="term" value="F:structural constituent of chromatin"/>
    <property type="evidence" value="ECO:0007669"/>
    <property type="project" value="InterPro"/>
</dbReference>
<dbReference type="GO" id="GO:0030261">
    <property type="term" value="P:chromosome condensation"/>
    <property type="evidence" value="ECO:0007669"/>
    <property type="project" value="TreeGrafter"/>
</dbReference>
<dbReference type="GO" id="GO:0045910">
    <property type="term" value="P:negative regulation of DNA recombination"/>
    <property type="evidence" value="ECO:0007669"/>
    <property type="project" value="TreeGrafter"/>
</dbReference>
<dbReference type="GO" id="GO:0006334">
    <property type="term" value="P:nucleosome assembly"/>
    <property type="evidence" value="ECO:0007669"/>
    <property type="project" value="InterPro"/>
</dbReference>
<dbReference type="CDD" id="cd00073">
    <property type="entry name" value="H15"/>
    <property type="match status" value="1"/>
</dbReference>
<dbReference type="FunFam" id="1.10.10.10:FF:000140">
    <property type="entry name" value="Histone H1.0"/>
    <property type="match status" value="1"/>
</dbReference>
<dbReference type="Gene3D" id="1.10.10.10">
    <property type="entry name" value="Winged helix-like DNA-binding domain superfamily/Winged helix DNA-binding domain"/>
    <property type="match status" value="1"/>
</dbReference>
<dbReference type="InterPro" id="IPR005819">
    <property type="entry name" value="H1/H5"/>
</dbReference>
<dbReference type="InterPro" id="IPR005818">
    <property type="entry name" value="Histone_H1/H5_H15"/>
</dbReference>
<dbReference type="InterPro" id="IPR036388">
    <property type="entry name" value="WH-like_DNA-bd_sf"/>
</dbReference>
<dbReference type="InterPro" id="IPR036390">
    <property type="entry name" value="WH_DNA-bd_sf"/>
</dbReference>
<dbReference type="PANTHER" id="PTHR11467">
    <property type="entry name" value="HISTONE H1"/>
    <property type="match status" value="1"/>
</dbReference>
<dbReference type="PANTHER" id="PTHR11467:SF182">
    <property type="entry name" value="HISTONE H1.0"/>
    <property type="match status" value="1"/>
</dbReference>
<dbReference type="Pfam" id="PF00538">
    <property type="entry name" value="Linker_histone"/>
    <property type="match status" value="1"/>
</dbReference>
<dbReference type="PRINTS" id="PR00624">
    <property type="entry name" value="HISTONEH5"/>
</dbReference>
<dbReference type="SMART" id="SM00526">
    <property type="entry name" value="H15"/>
    <property type="match status" value="1"/>
</dbReference>
<dbReference type="SUPFAM" id="SSF46785">
    <property type="entry name" value="Winged helix' DNA-binding domain"/>
    <property type="match status" value="1"/>
</dbReference>
<dbReference type="PROSITE" id="PS51504">
    <property type="entry name" value="H15"/>
    <property type="match status" value="1"/>
</dbReference>
<evidence type="ECO:0000250" key="1"/>
<evidence type="ECO:0000250" key="2">
    <source>
        <dbReference type="UniProtKB" id="P07305"/>
    </source>
</evidence>
<evidence type="ECO:0000250" key="3">
    <source>
        <dbReference type="UniProtKB" id="P43275"/>
    </source>
</evidence>
<evidence type="ECO:0000255" key="4">
    <source>
        <dbReference type="PROSITE-ProRule" id="PRU00837"/>
    </source>
</evidence>
<evidence type="ECO:0000256" key="5">
    <source>
        <dbReference type="SAM" id="MobiDB-lite"/>
    </source>
</evidence>
<name>H10_PONAB</name>
<comment type="function">
    <text evidence="1">Histones H1 are necessary for the condensation of nucleosome chains into higher-order structures. The histones H1.0 are found in cells that are in terminal stages of differentiation or that have low rates of cell division (By similarity).</text>
</comment>
<comment type="subcellular location">
    <subcellularLocation>
        <location evidence="4">Nucleus</location>
    </subcellularLocation>
    <subcellularLocation>
        <location evidence="4">Chromosome</location>
    </subcellularLocation>
</comment>
<comment type="PTM">
    <text evidence="2">ADP-ribosylated on Ser-104 in response to DNA damage.</text>
</comment>
<comment type="similarity">
    <text evidence="4">Belongs to the histone H1/H5 family.</text>
</comment>
<gene>
    <name type="primary">H1-0</name>
</gene>
<feature type="chain" id="PRO_0000423209" description="Histone H1.0">
    <location>
        <begin position="1"/>
        <end position="194"/>
    </location>
</feature>
<feature type="initiator methionine" description="Removed; alternate" evidence="2">
    <location>
        <position position="1"/>
    </location>
</feature>
<feature type="chain" id="PRO_0000259964" description="Histone H1.0, N-terminally processed">
    <location>
        <begin position="2"/>
        <end position="194"/>
    </location>
</feature>
<feature type="domain" description="H15" evidence="4">
    <location>
        <begin position="24"/>
        <end position="97"/>
    </location>
</feature>
<feature type="region of interest" description="Disordered" evidence="5">
    <location>
        <begin position="1"/>
        <end position="29"/>
    </location>
</feature>
<feature type="region of interest" description="Disordered" evidence="5">
    <location>
        <begin position="84"/>
        <end position="194"/>
    </location>
</feature>
<feature type="compositionally biased region" description="Low complexity" evidence="5">
    <location>
        <begin position="1"/>
        <end position="11"/>
    </location>
</feature>
<feature type="compositionally biased region" description="Basic residues" evidence="5">
    <location>
        <begin position="105"/>
        <end position="194"/>
    </location>
</feature>
<feature type="modified residue" description="N-acetylmethionine" evidence="2">
    <location>
        <position position="1"/>
    </location>
</feature>
<feature type="modified residue" description="N-acetylthreonine; in Histone H1.0, N-terminally processed" evidence="2">
    <location>
        <position position="2"/>
    </location>
</feature>
<feature type="modified residue" description="Citrulline" evidence="3">
    <location>
        <position position="42"/>
    </location>
</feature>
<feature type="modified residue" description="ADP-ribosylserine" evidence="2">
    <location>
        <position position="104"/>
    </location>
</feature>
<keyword id="KW-0007">Acetylation</keyword>
<keyword id="KW-0013">ADP-ribosylation</keyword>
<keyword id="KW-0158">Chromosome</keyword>
<keyword id="KW-0164">Citrullination</keyword>
<keyword id="KW-0238">DNA-binding</keyword>
<keyword id="KW-0539">Nucleus</keyword>
<keyword id="KW-1185">Reference proteome</keyword>
<protein>
    <recommendedName>
        <fullName>Histone H1.0</fullName>
    </recommendedName>
    <alternativeName>
        <fullName>Histone H1(0)</fullName>
    </alternativeName>
    <component>
        <recommendedName>
            <fullName>Histone H1.0, N-terminally processed</fullName>
        </recommendedName>
    </component>
</protein>
<accession>Q5NVN9</accession>
<reference key="1">
    <citation type="submission" date="2004-11" db="EMBL/GenBank/DDBJ databases">
        <authorList>
            <consortium name="The German cDNA consortium"/>
        </authorList>
    </citation>
    <scope>NUCLEOTIDE SEQUENCE [LARGE SCALE MRNA]</scope>
    <source>
        <tissue>Brain cortex</tissue>
    </source>
</reference>
<sequence>MTENSTSAPAAKPKRAKASKKSTDHPKYSDMVVAAIQAEKNRAGSSRQSIQKYIKSHYKVGENADSQIKLSIKRLVTTGVLKQTKGVGASGSFRLAKSDEPKKSVAFKKTKKEIKKVATPKKASKPKKAASKAPTKKPKATPVKKAKKKLAATPKKAKKPKTVKAKPVKASKPKKAKPVKPKAKSSAKRAGKKK</sequence>
<proteinExistence type="evidence at transcript level"/>
<organism>
    <name type="scientific">Pongo abelii</name>
    <name type="common">Sumatran orangutan</name>
    <name type="synonym">Pongo pygmaeus abelii</name>
    <dbReference type="NCBI Taxonomy" id="9601"/>
    <lineage>
        <taxon>Eukaryota</taxon>
        <taxon>Metazoa</taxon>
        <taxon>Chordata</taxon>
        <taxon>Craniata</taxon>
        <taxon>Vertebrata</taxon>
        <taxon>Euteleostomi</taxon>
        <taxon>Mammalia</taxon>
        <taxon>Eutheria</taxon>
        <taxon>Euarchontoglires</taxon>
        <taxon>Primates</taxon>
        <taxon>Haplorrhini</taxon>
        <taxon>Catarrhini</taxon>
        <taxon>Hominidae</taxon>
        <taxon>Pongo</taxon>
    </lineage>
</organism>